<evidence type="ECO:0000255" key="1">
    <source>
        <dbReference type="HAMAP-Rule" id="MF_00052"/>
    </source>
</evidence>
<evidence type="ECO:0000255" key="2">
    <source>
        <dbReference type="PROSITE-ProRule" id="PRU01319"/>
    </source>
</evidence>
<proteinExistence type="inferred from homology"/>
<comment type="function">
    <text evidence="1">Endonuclease that specifically degrades the RNA of RNA-DNA hybrids.</text>
</comment>
<comment type="catalytic activity">
    <reaction evidence="1">
        <text>Endonucleolytic cleavage to 5'-phosphomonoester.</text>
        <dbReference type="EC" id="3.1.26.4"/>
    </reaction>
</comment>
<comment type="cofactor">
    <cofactor evidence="1">
        <name>Mn(2+)</name>
        <dbReference type="ChEBI" id="CHEBI:29035"/>
    </cofactor>
    <cofactor evidence="1">
        <name>Mg(2+)</name>
        <dbReference type="ChEBI" id="CHEBI:18420"/>
    </cofactor>
    <text evidence="1">Manganese or magnesium. Binds 1 divalent metal ion per monomer in the absence of substrate. May bind a second metal ion after substrate binding.</text>
</comment>
<comment type="subcellular location">
    <subcellularLocation>
        <location evidence="1">Cytoplasm</location>
    </subcellularLocation>
</comment>
<comment type="similarity">
    <text evidence="1">Belongs to the RNase HII family.</text>
</comment>
<organism>
    <name type="scientific">Geobacillus sp. (strain WCH70)</name>
    <dbReference type="NCBI Taxonomy" id="471223"/>
    <lineage>
        <taxon>Bacteria</taxon>
        <taxon>Bacillati</taxon>
        <taxon>Bacillota</taxon>
        <taxon>Bacilli</taxon>
        <taxon>Bacillales</taxon>
        <taxon>Anoxybacillaceae</taxon>
        <taxon>Geobacillus</taxon>
    </lineage>
</organism>
<dbReference type="EC" id="3.1.26.4" evidence="1"/>
<dbReference type="EMBL" id="CP001638">
    <property type="protein sequence ID" value="ACS23956.1"/>
    <property type="molecule type" value="Genomic_DNA"/>
</dbReference>
<dbReference type="SMR" id="C5D8U9"/>
<dbReference type="STRING" id="471223.GWCH70_1096"/>
<dbReference type="KEGG" id="gwc:GWCH70_1096"/>
<dbReference type="eggNOG" id="COG0164">
    <property type="taxonomic scope" value="Bacteria"/>
</dbReference>
<dbReference type="HOGENOM" id="CLU_036532_2_1_9"/>
<dbReference type="OrthoDB" id="9803420at2"/>
<dbReference type="GO" id="GO:0005737">
    <property type="term" value="C:cytoplasm"/>
    <property type="evidence" value="ECO:0007669"/>
    <property type="project" value="UniProtKB-SubCell"/>
</dbReference>
<dbReference type="GO" id="GO:0032299">
    <property type="term" value="C:ribonuclease H2 complex"/>
    <property type="evidence" value="ECO:0007669"/>
    <property type="project" value="TreeGrafter"/>
</dbReference>
<dbReference type="GO" id="GO:0030145">
    <property type="term" value="F:manganese ion binding"/>
    <property type="evidence" value="ECO:0007669"/>
    <property type="project" value="UniProtKB-UniRule"/>
</dbReference>
<dbReference type="GO" id="GO:0003723">
    <property type="term" value="F:RNA binding"/>
    <property type="evidence" value="ECO:0007669"/>
    <property type="project" value="InterPro"/>
</dbReference>
<dbReference type="GO" id="GO:0004523">
    <property type="term" value="F:RNA-DNA hybrid ribonuclease activity"/>
    <property type="evidence" value="ECO:0007669"/>
    <property type="project" value="UniProtKB-UniRule"/>
</dbReference>
<dbReference type="GO" id="GO:0043137">
    <property type="term" value="P:DNA replication, removal of RNA primer"/>
    <property type="evidence" value="ECO:0007669"/>
    <property type="project" value="TreeGrafter"/>
</dbReference>
<dbReference type="GO" id="GO:0006298">
    <property type="term" value="P:mismatch repair"/>
    <property type="evidence" value="ECO:0007669"/>
    <property type="project" value="TreeGrafter"/>
</dbReference>
<dbReference type="CDD" id="cd07182">
    <property type="entry name" value="RNase_HII_bacteria_HII_like"/>
    <property type="match status" value="1"/>
</dbReference>
<dbReference type="FunFam" id="3.30.420.10:FF:000006">
    <property type="entry name" value="Ribonuclease HII"/>
    <property type="match status" value="1"/>
</dbReference>
<dbReference type="Gene3D" id="3.30.420.10">
    <property type="entry name" value="Ribonuclease H-like superfamily/Ribonuclease H"/>
    <property type="match status" value="1"/>
</dbReference>
<dbReference type="HAMAP" id="MF_00052_B">
    <property type="entry name" value="RNase_HII_B"/>
    <property type="match status" value="1"/>
</dbReference>
<dbReference type="InterPro" id="IPR022898">
    <property type="entry name" value="RNase_HII"/>
</dbReference>
<dbReference type="InterPro" id="IPR001352">
    <property type="entry name" value="RNase_HII/HIII"/>
</dbReference>
<dbReference type="InterPro" id="IPR024567">
    <property type="entry name" value="RNase_HII/HIII_dom"/>
</dbReference>
<dbReference type="InterPro" id="IPR012337">
    <property type="entry name" value="RNaseH-like_sf"/>
</dbReference>
<dbReference type="InterPro" id="IPR036397">
    <property type="entry name" value="RNaseH_sf"/>
</dbReference>
<dbReference type="NCBIfam" id="NF000594">
    <property type="entry name" value="PRK00015.1-1"/>
    <property type="match status" value="1"/>
</dbReference>
<dbReference type="NCBIfam" id="NF000595">
    <property type="entry name" value="PRK00015.1-3"/>
    <property type="match status" value="1"/>
</dbReference>
<dbReference type="PANTHER" id="PTHR10954">
    <property type="entry name" value="RIBONUCLEASE H2 SUBUNIT A"/>
    <property type="match status" value="1"/>
</dbReference>
<dbReference type="PANTHER" id="PTHR10954:SF18">
    <property type="entry name" value="RIBONUCLEASE HII"/>
    <property type="match status" value="1"/>
</dbReference>
<dbReference type="Pfam" id="PF01351">
    <property type="entry name" value="RNase_HII"/>
    <property type="match status" value="1"/>
</dbReference>
<dbReference type="SUPFAM" id="SSF53098">
    <property type="entry name" value="Ribonuclease H-like"/>
    <property type="match status" value="1"/>
</dbReference>
<dbReference type="PROSITE" id="PS51975">
    <property type="entry name" value="RNASE_H_2"/>
    <property type="match status" value="1"/>
</dbReference>
<reference key="1">
    <citation type="submission" date="2009-06" db="EMBL/GenBank/DDBJ databases">
        <title>Complete sequence of chromosome of Geopacillus sp. WCH70.</title>
        <authorList>
            <consortium name="US DOE Joint Genome Institute"/>
            <person name="Lucas S."/>
            <person name="Copeland A."/>
            <person name="Lapidus A."/>
            <person name="Glavina del Rio T."/>
            <person name="Dalin E."/>
            <person name="Tice H."/>
            <person name="Bruce D."/>
            <person name="Goodwin L."/>
            <person name="Pitluck S."/>
            <person name="Chertkov O."/>
            <person name="Brettin T."/>
            <person name="Detter J.C."/>
            <person name="Han C."/>
            <person name="Larimer F."/>
            <person name="Land M."/>
            <person name="Hauser L."/>
            <person name="Kyrpides N."/>
            <person name="Mikhailova N."/>
            <person name="Brumm P."/>
            <person name="Mead D.A."/>
            <person name="Richardson P."/>
        </authorList>
    </citation>
    <scope>NUCLEOTIDE SEQUENCE [LARGE SCALE GENOMIC DNA]</scope>
    <source>
        <strain>WCH70</strain>
    </source>
</reference>
<sequence length="277" mass="31395">MNKYTVKEIQALLQQIDDENAPLFKEIVQDERKSVQKLVARWYKQKKQEEQAKRQWQEMSRYERQLFEQGIEYIAGIDEAGRGPLAGPVVAAAVMLPKDAYIPGLNDSKKLSEAKREMLFHMIQSCAISIGIGVVTAAEIDEMNIYEATKKAMIKAVEQLSPKPDYLLIDAMTLPISTPQQSIVKGDANSVSIAASSIIAKVTRDHFMKQLAKQYPQYGFEKNMGYGTAQHLEAIRVYGTIDEHRRSFSPIKEMIEMKKEGKEYDQTHRQSIAGFSS</sequence>
<accession>C5D8U9</accession>
<keyword id="KW-0963">Cytoplasm</keyword>
<keyword id="KW-0255">Endonuclease</keyword>
<keyword id="KW-0378">Hydrolase</keyword>
<keyword id="KW-0464">Manganese</keyword>
<keyword id="KW-0479">Metal-binding</keyword>
<keyword id="KW-0540">Nuclease</keyword>
<feature type="chain" id="PRO_1000202285" description="Ribonuclease HII">
    <location>
        <begin position="1"/>
        <end position="277"/>
    </location>
</feature>
<feature type="domain" description="RNase H type-2" evidence="2">
    <location>
        <begin position="72"/>
        <end position="260"/>
    </location>
</feature>
<feature type="binding site" evidence="1">
    <location>
        <position position="78"/>
    </location>
    <ligand>
        <name>a divalent metal cation</name>
        <dbReference type="ChEBI" id="CHEBI:60240"/>
    </ligand>
</feature>
<feature type="binding site" evidence="1">
    <location>
        <position position="79"/>
    </location>
    <ligand>
        <name>a divalent metal cation</name>
        <dbReference type="ChEBI" id="CHEBI:60240"/>
    </ligand>
</feature>
<feature type="binding site" evidence="1">
    <location>
        <position position="170"/>
    </location>
    <ligand>
        <name>a divalent metal cation</name>
        <dbReference type="ChEBI" id="CHEBI:60240"/>
    </ligand>
</feature>
<name>RNH2_GEOSW</name>
<protein>
    <recommendedName>
        <fullName evidence="1">Ribonuclease HII</fullName>
        <shortName evidence="1">RNase HII</shortName>
        <ecNumber evidence="1">3.1.26.4</ecNumber>
    </recommendedName>
</protein>
<gene>
    <name evidence="1" type="primary">rnhB</name>
    <name type="ordered locus">GWCH70_1096</name>
</gene>